<sequence>MRILLVEDETDLGMAIKKVLVSEKYVVDWVTDGSQAWDYLENQWTEYTLAIVDWLLPGLSGLELCQKLRTQGNSLPVLMLTALGEPENRVEGLDAGADDYLTKPFVMAELLARLRALQRRSPQFQPQILTLGNFSLDPSNNLLSVTISEPLNLERQEIALTVREFQIFQYLMQNPERIISGSKIRQQLWDLDEEPMSNVVAAQMRLIRRKLAQQNCPCPIKTVPGQGYRFTLSP</sequence>
<proteinExistence type="evidence at protein level"/>
<feature type="chain" id="PRO_0000453145" description="Response regulator RppA">
    <location>
        <begin position="1"/>
        <end position="234"/>
    </location>
</feature>
<feature type="domain" description="Response regulatory" evidence="1">
    <location>
        <begin position="2"/>
        <end position="118"/>
    </location>
</feature>
<feature type="DNA-binding region" description="OmpR/PhoB-type" evidence="2">
    <location>
        <begin position="126"/>
        <end position="232"/>
    </location>
</feature>
<feature type="modified residue" description="4-aspartylphosphate" evidence="1">
    <location>
        <position position="53"/>
    </location>
</feature>
<protein>
    <recommendedName>
        <fullName evidence="6">Response regulator RppA</fullName>
    </recommendedName>
    <alternativeName>
        <fullName evidence="7">Regulator of nickel resistance operon NrsR</fullName>
    </alternativeName>
    <alternativeName>
        <fullName evidence="6">Regulator of photosynthesis- and photopigment-related gene expression</fullName>
    </alternativeName>
</protein>
<comment type="function">
    <text evidence="3 4 8">Member of two-component regulatory system RppA/RppB, involved in the establishment of the appropriate stoichiometry between the 2 photosystems. It senses changes in the plastoquinone (PQ) redox poise (PubMed:10894737). Another group shows this two-component pair, renamed NrsR/NrsS, controls the nickel-dependent expression of the nrsBACD operon; they suggest the photosystem-related activities seen earlier are due to the expression of NrsS (RppB) in the absence of its natural substrate NrsR (RppA) (PubMed:11849552). May accept phosphate from Hik2 in a possible Hik2/RppA two-component system (Probable).</text>
</comment>
<comment type="subunit">
    <text evidence="5">Interacts with histidine kinase Hik2; may accept phosphate from Hik2.</text>
</comment>
<comment type="induction">
    <text evidence="4">Expression of the rrpa-rrpB (nrsR-nrsS) operon is induced 3-fold by Ni(2+) and less by Co(2+). Autoregulates its own expression.</text>
</comment>
<comment type="domain">
    <text evidence="4">The N-terminal response regulatory domain inhibits DNA-binding by the rest of the protein, in its absence the protein binds specifically to the nrsRS-nrsBACD (slr0793-slr0796) intergenic region.</text>
</comment>
<comment type="disruption phenotype">
    <text evidence="3 4">Grows faster than wild-type photomixotrophically (in light with glucose), specific activity of photosystem II (PSII) is about 30% higher, most cells are single when 90% of wild-type are doublets. Increased transcription of most PSII genes under most conditions, transcription of PSI and phycobilisome-related genes are mostly decreased (PubMed:10894737). A double rppA-rppB (nrsR-nrsS) deletion is less tolerant to growth on Ni(2+), no longer expresses nrsB (slr0793, involved in Ni(2+) resistance) in response to Ni(2+). Loss of expression of this operon. There are no growth effects, no changes in pigment concentration, no changes in PSII or nblA transcript levels seen in the double mutant (PubMed:11849552).</text>
</comment>
<evidence type="ECO:0000255" key="1">
    <source>
        <dbReference type="PROSITE-ProRule" id="PRU00169"/>
    </source>
</evidence>
<evidence type="ECO:0000255" key="2">
    <source>
        <dbReference type="PROSITE-ProRule" id="PRU01091"/>
    </source>
</evidence>
<evidence type="ECO:0000269" key="3">
    <source>
    </source>
</evidence>
<evidence type="ECO:0000269" key="4">
    <source>
    </source>
</evidence>
<evidence type="ECO:0000269" key="5">
    <source>
    </source>
</evidence>
<evidence type="ECO:0000303" key="6">
    <source>
    </source>
</evidence>
<evidence type="ECO:0000303" key="7">
    <source>
    </source>
</evidence>
<evidence type="ECO:0000305" key="8">
    <source>
    </source>
</evidence>
<evidence type="ECO:0000312" key="9">
    <source>
        <dbReference type="EMBL" id="BAA10698.1"/>
    </source>
</evidence>
<dbReference type="EMBL" id="BA000022">
    <property type="protein sequence ID" value="BAA10698.1"/>
    <property type="molecule type" value="Genomic_DNA"/>
</dbReference>
<dbReference type="PIR" id="S77006">
    <property type="entry name" value="S77006"/>
</dbReference>
<dbReference type="SMR" id="Q55933"/>
<dbReference type="IntAct" id="Q55933">
    <property type="interactions" value="3"/>
</dbReference>
<dbReference type="STRING" id="1148.gene:10500202"/>
<dbReference type="PaxDb" id="1148-1001817"/>
<dbReference type="EnsemblBacteria" id="BAA10698">
    <property type="protein sequence ID" value="BAA10698"/>
    <property type="gene ID" value="BAA10698"/>
</dbReference>
<dbReference type="KEGG" id="syn:sll0797"/>
<dbReference type="eggNOG" id="COG0745">
    <property type="taxonomic scope" value="Bacteria"/>
</dbReference>
<dbReference type="InParanoid" id="Q55933"/>
<dbReference type="PhylomeDB" id="Q55933"/>
<dbReference type="Proteomes" id="UP000001425">
    <property type="component" value="Chromosome"/>
</dbReference>
<dbReference type="GO" id="GO:0005829">
    <property type="term" value="C:cytosol"/>
    <property type="evidence" value="ECO:0000318"/>
    <property type="project" value="GO_Central"/>
</dbReference>
<dbReference type="GO" id="GO:0032993">
    <property type="term" value="C:protein-DNA complex"/>
    <property type="evidence" value="ECO:0000318"/>
    <property type="project" value="GO_Central"/>
</dbReference>
<dbReference type="GO" id="GO:0000156">
    <property type="term" value="F:phosphorelay response regulator activity"/>
    <property type="evidence" value="ECO:0000318"/>
    <property type="project" value="GO_Central"/>
</dbReference>
<dbReference type="GO" id="GO:0000976">
    <property type="term" value="F:transcription cis-regulatory region binding"/>
    <property type="evidence" value="ECO:0000318"/>
    <property type="project" value="GO_Central"/>
</dbReference>
<dbReference type="GO" id="GO:0006355">
    <property type="term" value="P:regulation of DNA-templated transcription"/>
    <property type="evidence" value="ECO:0000318"/>
    <property type="project" value="GO_Central"/>
</dbReference>
<dbReference type="CDD" id="cd19935">
    <property type="entry name" value="REC_OmpR_CusR-like"/>
    <property type="match status" value="1"/>
</dbReference>
<dbReference type="CDD" id="cd00383">
    <property type="entry name" value="trans_reg_C"/>
    <property type="match status" value="1"/>
</dbReference>
<dbReference type="FunFam" id="3.40.50.2300:FF:000002">
    <property type="entry name" value="DNA-binding response regulator PhoP"/>
    <property type="match status" value="1"/>
</dbReference>
<dbReference type="FunFam" id="1.10.10.10:FF:000918">
    <property type="entry name" value="OmpR subfamily"/>
    <property type="match status" value="1"/>
</dbReference>
<dbReference type="Gene3D" id="3.40.50.2300">
    <property type="match status" value="1"/>
</dbReference>
<dbReference type="Gene3D" id="6.10.250.690">
    <property type="match status" value="1"/>
</dbReference>
<dbReference type="Gene3D" id="1.10.10.10">
    <property type="entry name" value="Winged helix-like DNA-binding domain superfamily/Winged helix DNA-binding domain"/>
    <property type="match status" value="1"/>
</dbReference>
<dbReference type="InterPro" id="IPR011006">
    <property type="entry name" value="CheY-like_superfamily"/>
</dbReference>
<dbReference type="InterPro" id="IPR001867">
    <property type="entry name" value="OmpR/PhoB-type_DNA-bd"/>
</dbReference>
<dbReference type="InterPro" id="IPR049767">
    <property type="entry name" value="RppA"/>
</dbReference>
<dbReference type="InterPro" id="IPR016032">
    <property type="entry name" value="Sig_transdc_resp-reg_C-effctor"/>
</dbReference>
<dbReference type="InterPro" id="IPR001789">
    <property type="entry name" value="Sig_transdc_resp-reg_receiver"/>
</dbReference>
<dbReference type="InterPro" id="IPR039420">
    <property type="entry name" value="WalR-like"/>
</dbReference>
<dbReference type="InterPro" id="IPR036388">
    <property type="entry name" value="WH-like_DNA-bd_sf"/>
</dbReference>
<dbReference type="NCBIfam" id="NF041734">
    <property type="entry name" value="resp_reg_RppA"/>
    <property type="match status" value="1"/>
</dbReference>
<dbReference type="PANTHER" id="PTHR48111">
    <property type="entry name" value="REGULATOR OF RPOS"/>
    <property type="match status" value="1"/>
</dbReference>
<dbReference type="PANTHER" id="PTHR48111:SF5">
    <property type="entry name" value="RESPONSE REGULATOR RPPA"/>
    <property type="match status" value="1"/>
</dbReference>
<dbReference type="Pfam" id="PF00072">
    <property type="entry name" value="Response_reg"/>
    <property type="match status" value="1"/>
</dbReference>
<dbReference type="Pfam" id="PF00486">
    <property type="entry name" value="Trans_reg_C"/>
    <property type="match status" value="1"/>
</dbReference>
<dbReference type="SMART" id="SM00448">
    <property type="entry name" value="REC"/>
    <property type="match status" value="1"/>
</dbReference>
<dbReference type="SMART" id="SM00862">
    <property type="entry name" value="Trans_reg_C"/>
    <property type="match status" value="1"/>
</dbReference>
<dbReference type="SUPFAM" id="SSF46894">
    <property type="entry name" value="C-terminal effector domain of the bipartite response regulators"/>
    <property type="match status" value="1"/>
</dbReference>
<dbReference type="SUPFAM" id="SSF52172">
    <property type="entry name" value="CheY-like"/>
    <property type="match status" value="1"/>
</dbReference>
<dbReference type="PROSITE" id="PS51755">
    <property type="entry name" value="OMPR_PHOB"/>
    <property type="match status" value="1"/>
</dbReference>
<dbReference type="PROSITE" id="PS50110">
    <property type="entry name" value="RESPONSE_REGULATORY"/>
    <property type="match status" value="1"/>
</dbReference>
<gene>
    <name evidence="6" type="primary">rppA</name>
    <name evidence="7" type="synonym">nrsR</name>
    <name evidence="9" type="ordered locus">sll0797</name>
</gene>
<name>RPPA_SYNY3</name>
<organism>
    <name type="scientific">Synechocystis sp. (strain ATCC 27184 / PCC 6803 / Kazusa)</name>
    <dbReference type="NCBI Taxonomy" id="1111708"/>
    <lineage>
        <taxon>Bacteria</taxon>
        <taxon>Bacillati</taxon>
        <taxon>Cyanobacteriota</taxon>
        <taxon>Cyanophyceae</taxon>
        <taxon>Synechococcales</taxon>
        <taxon>Merismopediaceae</taxon>
        <taxon>Synechocystis</taxon>
    </lineage>
</organism>
<reference key="1">
    <citation type="journal article" date="1996" name="DNA Res.">
        <title>Sequence analysis of the genome of the unicellular cyanobacterium Synechocystis sp. strain PCC6803. II. Sequence determination of the entire genome and assignment of potential protein-coding regions.</title>
        <authorList>
            <person name="Kaneko T."/>
            <person name="Sato S."/>
            <person name="Kotani H."/>
            <person name="Tanaka A."/>
            <person name="Asamizu E."/>
            <person name="Nakamura Y."/>
            <person name="Miyajima N."/>
            <person name="Hirosawa M."/>
            <person name="Sugiura M."/>
            <person name="Sasamoto S."/>
            <person name="Kimura T."/>
            <person name="Hosouchi T."/>
            <person name="Matsuno A."/>
            <person name="Muraki A."/>
            <person name="Nakazaki N."/>
            <person name="Naruo K."/>
            <person name="Okumura S."/>
            <person name="Shimpo S."/>
            <person name="Takeuchi C."/>
            <person name="Wada T."/>
            <person name="Watanabe A."/>
            <person name="Yamada M."/>
            <person name="Yasuda M."/>
            <person name="Tabata S."/>
        </authorList>
    </citation>
    <scope>NUCLEOTIDE SEQUENCE [LARGE SCALE GENOMIC DNA]</scope>
    <source>
        <strain>ATCC 27184 / PCC 6803 / Kazusa</strain>
    </source>
</reference>
<reference key="2">
    <citation type="journal article" date="2000" name="J. Bacteriol.">
        <title>A redox-responsive regulator of photosynthesis gene expression in the cyanobacterium Synechocystis sp. Strain PCC 6803.</title>
        <authorList>
            <person name="Li H."/>
            <person name="Sherman L.A."/>
        </authorList>
    </citation>
    <scope>FUNCTION IN PHOTOSYSTEM BALANCE</scope>
    <scope>DISRUPTION PHENOTYPE</scope>
    <source>
        <strain>ATCC 27184 / PCC 6803 / Kazusa</strain>
    </source>
</reference>
<reference key="3">
    <citation type="journal article" date="2002" name="Mol. Microbiol.">
        <title>A two-component signal transduction system involved in nickel sensing in the cyanobacterium Synechocystis sp. PCC 6803.</title>
        <authorList>
            <person name="Lopez-Maury L."/>
            <person name="Garcia-Dominguez M."/>
            <person name="Florencio F.J."/>
            <person name="Reyes J.C."/>
        </authorList>
    </citation>
    <scope>FUNCTION IN NICKEL RESPONSE</scope>
    <scope>INDUCTION BY NI(2+)</scope>
    <scope>OPERON</scope>
    <scope>DOMAIN</scope>
    <scope>DISRUPTION PHENOTYPE</scope>
    <scope>DNA-BINDING</scope>
    <source>
        <strain>ATCC 27184 / PCC 6803 / Kazusa</strain>
    </source>
</reference>
<reference key="4">
    <citation type="journal article" date="2016" name="Front. Plant Sci.">
        <title>A Two-Component Regulatory System in Transcriptional Control of Photosystem Stoichiometry: Redox-Dependent and Sodium Ion-Dependent Phosphoryl Transfer from Cyanobacterial Histidine Kinase Hik2 to Response Regulators Rre1 and RppA.</title>
        <authorList>
            <person name="Ibrahim I.M."/>
            <person name="Puthiyaveetil S."/>
            <person name="Allen J.F."/>
        </authorList>
    </citation>
    <scope>INTERACTION WITH HIK2</scope>
    <source>
        <strain>ATCC 27184 / PCC 6803 / Kazusa</strain>
    </source>
</reference>
<keyword id="KW-0238">DNA-binding</keyword>
<keyword id="KW-0597">Phosphoprotein</keyword>
<keyword id="KW-1185">Reference proteome</keyword>
<keyword id="KW-0804">Transcription</keyword>
<keyword id="KW-0805">Transcription regulation</keyword>
<keyword id="KW-0902">Two-component regulatory system</keyword>
<accession>Q55933</accession>